<reference key="1">
    <citation type="journal article" date="2004" name="Nat. Biotechnol.">
        <title>The genome sequence of the anaerobic, sulfate-reducing bacterium Desulfovibrio vulgaris Hildenborough.</title>
        <authorList>
            <person name="Heidelberg J.F."/>
            <person name="Seshadri R."/>
            <person name="Haveman S.A."/>
            <person name="Hemme C.L."/>
            <person name="Paulsen I.T."/>
            <person name="Kolonay J.F."/>
            <person name="Eisen J.A."/>
            <person name="Ward N.L."/>
            <person name="Methe B.A."/>
            <person name="Brinkac L.M."/>
            <person name="Daugherty S.C."/>
            <person name="DeBoy R.T."/>
            <person name="Dodson R.J."/>
            <person name="Durkin A.S."/>
            <person name="Madupu R."/>
            <person name="Nelson W.C."/>
            <person name="Sullivan S.A."/>
            <person name="Fouts D.E."/>
            <person name="Haft D.H."/>
            <person name="Selengut J."/>
            <person name="Peterson J.D."/>
            <person name="Davidsen T.M."/>
            <person name="Zafar N."/>
            <person name="Zhou L."/>
            <person name="Radune D."/>
            <person name="Dimitrov G."/>
            <person name="Hance M."/>
            <person name="Tran K."/>
            <person name="Khouri H.M."/>
            <person name="Gill J."/>
            <person name="Utterback T.R."/>
            <person name="Feldblyum T.V."/>
            <person name="Wall J.D."/>
            <person name="Voordouw G."/>
            <person name="Fraser C.M."/>
        </authorList>
    </citation>
    <scope>NUCLEOTIDE SEQUENCE [LARGE SCALE GENOMIC DNA]</scope>
    <source>
        <strain>ATCC 29579 / DSM 644 / CCUG 34227 / NCIMB 8303 / VKM B-1760 / Hildenborough</strain>
    </source>
</reference>
<name>HISX_NITV2</name>
<accession>P62457</accession>
<dbReference type="EC" id="1.1.1.23" evidence="1"/>
<dbReference type="EMBL" id="AE017285">
    <property type="protein sequence ID" value="AAS95276.1"/>
    <property type="molecule type" value="Genomic_DNA"/>
</dbReference>
<dbReference type="RefSeq" id="WP_010938097.1">
    <property type="nucleotide sequence ID" value="NC_002937.3"/>
</dbReference>
<dbReference type="RefSeq" id="YP_010017.1">
    <property type="nucleotide sequence ID" value="NC_002937.3"/>
</dbReference>
<dbReference type="SMR" id="P62457"/>
<dbReference type="IntAct" id="P62457">
    <property type="interactions" value="1"/>
</dbReference>
<dbReference type="STRING" id="882.DVU_0796"/>
<dbReference type="PaxDb" id="882-DVU_0796"/>
<dbReference type="EnsemblBacteria" id="AAS95276">
    <property type="protein sequence ID" value="AAS95276"/>
    <property type="gene ID" value="DVU_0796"/>
</dbReference>
<dbReference type="KEGG" id="dvu:DVU_0796"/>
<dbReference type="PATRIC" id="fig|882.5.peg.747"/>
<dbReference type="eggNOG" id="COG0141">
    <property type="taxonomic scope" value="Bacteria"/>
</dbReference>
<dbReference type="HOGENOM" id="CLU_006732_3_3_7"/>
<dbReference type="OrthoDB" id="9805269at2"/>
<dbReference type="PhylomeDB" id="P62457"/>
<dbReference type="UniPathway" id="UPA00031">
    <property type="reaction ID" value="UER00014"/>
</dbReference>
<dbReference type="Proteomes" id="UP000002194">
    <property type="component" value="Chromosome"/>
</dbReference>
<dbReference type="GO" id="GO:0005829">
    <property type="term" value="C:cytosol"/>
    <property type="evidence" value="ECO:0007669"/>
    <property type="project" value="TreeGrafter"/>
</dbReference>
<dbReference type="GO" id="GO:0004399">
    <property type="term" value="F:histidinol dehydrogenase activity"/>
    <property type="evidence" value="ECO:0007669"/>
    <property type="project" value="UniProtKB-UniRule"/>
</dbReference>
<dbReference type="GO" id="GO:0051287">
    <property type="term" value="F:NAD binding"/>
    <property type="evidence" value="ECO:0007669"/>
    <property type="project" value="InterPro"/>
</dbReference>
<dbReference type="GO" id="GO:0008270">
    <property type="term" value="F:zinc ion binding"/>
    <property type="evidence" value="ECO:0007669"/>
    <property type="project" value="UniProtKB-UniRule"/>
</dbReference>
<dbReference type="GO" id="GO:0000105">
    <property type="term" value="P:L-histidine biosynthetic process"/>
    <property type="evidence" value="ECO:0007669"/>
    <property type="project" value="UniProtKB-UniRule"/>
</dbReference>
<dbReference type="CDD" id="cd06572">
    <property type="entry name" value="Histidinol_dh"/>
    <property type="match status" value="1"/>
</dbReference>
<dbReference type="FunFam" id="3.40.50.1980:FF:000001">
    <property type="entry name" value="Histidinol dehydrogenase"/>
    <property type="match status" value="1"/>
</dbReference>
<dbReference type="Gene3D" id="1.20.5.1300">
    <property type="match status" value="1"/>
</dbReference>
<dbReference type="Gene3D" id="3.40.50.1980">
    <property type="entry name" value="Nitrogenase molybdenum iron protein domain"/>
    <property type="match status" value="2"/>
</dbReference>
<dbReference type="HAMAP" id="MF_01024">
    <property type="entry name" value="HisD"/>
    <property type="match status" value="1"/>
</dbReference>
<dbReference type="InterPro" id="IPR016161">
    <property type="entry name" value="Ald_DH/histidinol_DH"/>
</dbReference>
<dbReference type="InterPro" id="IPR001692">
    <property type="entry name" value="Histidinol_DH_CS"/>
</dbReference>
<dbReference type="InterPro" id="IPR022695">
    <property type="entry name" value="Histidinol_DH_monofunct"/>
</dbReference>
<dbReference type="InterPro" id="IPR012131">
    <property type="entry name" value="Hstdl_DH"/>
</dbReference>
<dbReference type="NCBIfam" id="TIGR00069">
    <property type="entry name" value="hisD"/>
    <property type="match status" value="1"/>
</dbReference>
<dbReference type="PANTHER" id="PTHR21256:SF2">
    <property type="entry name" value="HISTIDINE BIOSYNTHESIS TRIFUNCTIONAL PROTEIN"/>
    <property type="match status" value="1"/>
</dbReference>
<dbReference type="PANTHER" id="PTHR21256">
    <property type="entry name" value="HISTIDINOL DEHYDROGENASE HDH"/>
    <property type="match status" value="1"/>
</dbReference>
<dbReference type="Pfam" id="PF00815">
    <property type="entry name" value="Histidinol_dh"/>
    <property type="match status" value="1"/>
</dbReference>
<dbReference type="PIRSF" id="PIRSF000099">
    <property type="entry name" value="Histidinol_dh"/>
    <property type="match status" value="1"/>
</dbReference>
<dbReference type="PRINTS" id="PR00083">
    <property type="entry name" value="HOLDHDRGNASE"/>
</dbReference>
<dbReference type="SUPFAM" id="SSF53720">
    <property type="entry name" value="ALDH-like"/>
    <property type="match status" value="1"/>
</dbReference>
<dbReference type="PROSITE" id="PS00611">
    <property type="entry name" value="HISOL_DEHYDROGENASE"/>
    <property type="match status" value="1"/>
</dbReference>
<comment type="function">
    <text evidence="1">Catalyzes the sequential NAD-dependent oxidations of L-histidinol to L-histidinaldehyde and then to L-histidine.</text>
</comment>
<comment type="catalytic activity">
    <reaction evidence="1">
        <text>L-histidinol + 2 NAD(+) + H2O = L-histidine + 2 NADH + 3 H(+)</text>
        <dbReference type="Rhea" id="RHEA:20641"/>
        <dbReference type="ChEBI" id="CHEBI:15377"/>
        <dbReference type="ChEBI" id="CHEBI:15378"/>
        <dbReference type="ChEBI" id="CHEBI:57540"/>
        <dbReference type="ChEBI" id="CHEBI:57595"/>
        <dbReference type="ChEBI" id="CHEBI:57699"/>
        <dbReference type="ChEBI" id="CHEBI:57945"/>
        <dbReference type="EC" id="1.1.1.23"/>
    </reaction>
</comment>
<comment type="cofactor">
    <cofactor evidence="1">
        <name>Zn(2+)</name>
        <dbReference type="ChEBI" id="CHEBI:29105"/>
    </cofactor>
    <text evidence="1">Binds 1 zinc ion per subunit.</text>
</comment>
<comment type="pathway">
    <text evidence="1">Amino-acid biosynthesis; L-histidine biosynthesis; L-histidine from 5-phospho-alpha-D-ribose 1-diphosphate: step 9/9.</text>
</comment>
<comment type="similarity">
    <text evidence="1">Belongs to the histidinol dehydrogenase family.</text>
</comment>
<evidence type="ECO:0000255" key="1">
    <source>
        <dbReference type="HAMAP-Rule" id="MF_01024"/>
    </source>
</evidence>
<protein>
    <recommendedName>
        <fullName evidence="1">Histidinol dehydrogenase</fullName>
        <shortName evidence="1">HDH</shortName>
        <ecNumber evidence="1">1.1.1.23</ecNumber>
    </recommendedName>
</protein>
<proteinExistence type="inferred from homology"/>
<sequence>MPCRILTLQSEAQWPLLGDMLAGRYDPDDAVEPVVRDILAAVRSKGDEALAEYTRRFDCPDFTPALLHVTSEEVAQAVASVPADDIAIIRQAADNIRSFHEAQKERSWFVTHDDGTILGQKVTPVDRAGLYVPGGKGGDTPLLSSLLMNAIPAQVAGVTSITVASPPRPDGTLNPHLLAAAHILGITDIIRAGSAWAVAAFAFGTQTIAPVDVIAGPGNIFVTTAKRMVQGRVAIDMIAGPSEILILADATARPDWVAADMLSQAEHDPLASSILVTTEPALAEAVTAELERQLATLPRADIARKALADWGAVVVVPDMDVAVAIANRVAPEHLEVLTAQPWELAGSLRHAGALFLGPYSPEPLGDYFAGPNHVLPTMGTARFSSALSVQTFCKRTSIIAASRAFAERNADAVARLARLEGLEAHARSAASRNSQQ</sequence>
<gene>
    <name evidence="1" type="primary">hisD</name>
    <name type="ordered locus">DVU_0796</name>
</gene>
<keyword id="KW-0028">Amino-acid biosynthesis</keyword>
<keyword id="KW-0368">Histidine biosynthesis</keyword>
<keyword id="KW-0479">Metal-binding</keyword>
<keyword id="KW-0520">NAD</keyword>
<keyword id="KW-0560">Oxidoreductase</keyword>
<keyword id="KW-1185">Reference proteome</keyword>
<keyword id="KW-0862">Zinc</keyword>
<feature type="chain" id="PRO_0000135768" description="Histidinol dehydrogenase">
    <location>
        <begin position="1"/>
        <end position="436"/>
    </location>
</feature>
<feature type="active site" description="Proton acceptor" evidence="1">
    <location>
        <position position="332"/>
    </location>
</feature>
<feature type="active site" description="Proton acceptor" evidence="1">
    <location>
        <position position="333"/>
    </location>
</feature>
<feature type="binding site" evidence="1">
    <location>
        <position position="242"/>
    </location>
    <ligand>
        <name>substrate</name>
    </ligand>
</feature>
<feature type="binding site" evidence="1">
    <location>
        <position position="264"/>
    </location>
    <ligand>
        <name>substrate</name>
    </ligand>
</feature>
<feature type="binding site" evidence="1">
    <location>
        <position position="264"/>
    </location>
    <ligand>
        <name>Zn(2+)</name>
        <dbReference type="ChEBI" id="CHEBI:29105"/>
    </ligand>
</feature>
<feature type="binding site" evidence="1">
    <location>
        <position position="267"/>
    </location>
    <ligand>
        <name>substrate</name>
    </ligand>
</feature>
<feature type="binding site" evidence="1">
    <location>
        <position position="267"/>
    </location>
    <ligand>
        <name>Zn(2+)</name>
        <dbReference type="ChEBI" id="CHEBI:29105"/>
    </ligand>
</feature>
<feature type="binding site" evidence="1">
    <location>
        <position position="333"/>
    </location>
    <ligand>
        <name>substrate</name>
    </ligand>
</feature>
<feature type="binding site" evidence="1">
    <location>
        <position position="366"/>
    </location>
    <ligand>
        <name>substrate</name>
    </ligand>
</feature>
<feature type="binding site" evidence="1">
    <location>
        <position position="366"/>
    </location>
    <ligand>
        <name>Zn(2+)</name>
        <dbReference type="ChEBI" id="CHEBI:29105"/>
    </ligand>
</feature>
<feature type="binding site" evidence="1">
    <location>
        <position position="420"/>
    </location>
    <ligand>
        <name>substrate</name>
    </ligand>
</feature>
<feature type="binding site" evidence="1">
    <location>
        <position position="425"/>
    </location>
    <ligand>
        <name>substrate</name>
    </ligand>
</feature>
<feature type="binding site" evidence="1">
    <location>
        <position position="425"/>
    </location>
    <ligand>
        <name>Zn(2+)</name>
        <dbReference type="ChEBI" id="CHEBI:29105"/>
    </ligand>
</feature>
<organism>
    <name type="scientific">Nitratidesulfovibrio vulgaris (strain ATCC 29579 / DSM 644 / CCUG 34227 / NCIMB 8303 / VKM B-1760 / Hildenborough)</name>
    <name type="common">Desulfovibrio vulgaris</name>
    <dbReference type="NCBI Taxonomy" id="882"/>
    <lineage>
        <taxon>Bacteria</taxon>
        <taxon>Pseudomonadati</taxon>
        <taxon>Thermodesulfobacteriota</taxon>
        <taxon>Desulfovibrionia</taxon>
        <taxon>Desulfovibrionales</taxon>
        <taxon>Desulfovibrionaceae</taxon>
        <taxon>Nitratidesulfovibrio</taxon>
    </lineage>
</organism>